<protein>
    <recommendedName>
        <fullName evidence="1">Ribosomal protein L11 methyltransferase</fullName>
        <shortName evidence="1">L11 Mtase</shortName>
        <ecNumber evidence="1">2.1.1.-</ecNumber>
    </recommendedName>
</protein>
<comment type="function">
    <text evidence="1">Methylates ribosomal protein L11.</text>
</comment>
<comment type="catalytic activity">
    <reaction evidence="1">
        <text>L-lysyl-[protein] + 3 S-adenosyl-L-methionine = N(6),N(6),N(6)-trimethyl-L-lysyl-[protein] + 3 S-adenosyl-L-homocysteine + 3 H(+)</text>
        <dbReference type="Rhea" id="RHEA:54192"/>
        <dbReference type="Rhea" id="RHEA-COMP:9752"/>
        <dbReference type="Rhea" id="RHEA-COMP:13826"/>
        <dbReference type="ChEBI" id="CHEBI:15378"/>
        <dbReference type="ChEBI" id="CHEBI:29969"/>
        <dbReference type="ChEBI" id="CHEBI:57856"/>
        <dbReference type="ChEBI" id="CHEBI:59789"/>
        <dbReference type="ChEBI" id="CHEBI:61961"/>
    </reaction>
</comment>
<comment type="subcellular location">
    <subcellularLocation>
        <location evidence="1">Cytoplasm</location>
    </subcellularLocation>
</comment>
<comment type="similarity">
    <text evidence="1">Belongs to the methyltransferase superfamily. PrmA family.</text>
</comment>
<accession>Q9KD70</accession>
<dbReference type="EC" id="2.1.1.-" evidence="1"/>
<dbReference type="EMBL" id="BA000004">
    <property type="protein sequence ID" value="BAB05068.1"/>
    <property type="molecule type" value="Genomic_DNA"/>
</dbReference>
<dbReference type="PIR" id="E83818">
    <property type="entry name" value="E83818"/>
</dbReference>
<dbReference type="RefSeq" id="WP_010897514.1">
    <property type="nucleotide sequence ID" value="NC_002570.2"/>
</dbReference>
<dbReference type="SMR" id="Q9KD70"/>
<dbReference type="STRING" id="272558.gene:10727243"/>
<dbReference type="GeneID" id="87596969"/>
<dbReference type="KEGG" id="bha:BH1349"/>
<dbReference type="eggNOG" id="COG2264">
    <property type="taxonomic scope" value="Bacteria"/>
</dbReference>
<dbReference type="HOGENOM" id="CLU_049382_0_1_9"/>
<dbReference type="OrthoDB" id="9785995at2"/>
<dbReference type="Proteomes" id="UP000001258">
    <property type="component" value="Chromosome"/>
</dbReference>
<dbReference type="GO" id="GO:0005737">
    <property type="term" value="C:cytoplasm"/>
    <property type="evidence" value="ECO:0007669"/>
    <property type="project" value="UniProtKB-SubCell"/>
</dbReference>
<dbReference type="GO" id="GO:0016279">
    <property type="term" value="F:protein-lysine N-methyltransferase activity"/>
    <property type="evidence" value="ECO:0007669"/>
    <property type="project" value="RHEA"/>
</dbReference>
<dbReference type="GO" id="GO:0032259">
    <property type="term" value="P:methylation"/>
    <property type="evidence" value="ECO:0007669"/>
    <property type="project" value="UniProtKB-KW"/>
</dbReference>
<dbReference type="CDD" id="cd02440">
    <property type="entry name" value="AdoMet_MTases"/>
    <property type="match status" value="1"/>
</dbReference>
<dbReference type="Gene3D" id="3.40.50.150">
    <property type="entry name" value="Vaccinia Virus protein VP39"/>
    <property type="match status" value="1"/>
</dbReference>
<dbReference type="HAMAP" id="MF_00735">
    <property type="entry name" value="Methyltr_PrmA"/>
    <property type="match status" value="1"/>
</dbReference>
<dbReference type="InterPro" id="IPR050078">
    <property type="entry name" value="Ribosomal_L11_MeTrfase_PrmA"/>
</dbReference>
<dbReference type="InterPro" id="IPR004498">
    <property type="entry name" value="Ribosomal_PrmA_MeTrfase"/>
</dbReference>
<dbReference type="InterPro" id="IPR029063">
    <property type="entry name" value="SAM-dependent_MTases_sf"/>
</dbReference>
<dbReference type="NCBIfam" id="TIGR00406">
    <property type="entry name" value="prmA"/>
    <property type="match status" value="1"/>
</dbReference>
<dbReference type="PANTHER" id="PTHR43648">
    <property type="entry name" value="ELECTRON TRANSFER FLAVOPROTEIN BETA SUBUNIT LYSINE METHYLTRANSFERASE"/>
    <property type="match status" value="1"/>
</dbReference>
<dbReference type="PANTHER" id="PTHR43648:SF1">
    <property type="entry name" value="ELECTRON TRANSFER FLAVOPROTEIN BETA SUBUNIT LYSINE METHYLTRANSFERASE"/>
    <property type="match status" value="1"/>
</dbReference>
<dbReference type="Pfam" id="PF06325">
    <property type="entry name" value="PrmA"/>
    <property type="match status" value="1"/>
</dbReference>
<dbReference type="PIRSF" id="PIRSF000401">
    <property type="entry name" value="RPL11_MTase"/>
    <property type="match status" value="1"/>
</dbReference>
<dbReference type="SUPFAM" id="SSF53335">
    <property type="entry name" value="S-adenosyl-L-methionine-dependent methyltransferases"/>
    <property type="match status" value="1"/>
</dbReference>
<sequence>MKWSEFSIHTTQEAVEPVCNILHEAGASGVVIEDPKDLVKEWGVHYGEIYQLNPDDYPEEGVMIKAYFPVNSFLGETIEEIKEAINGLLLYDIDLGHNKIQLVEVLEEEWATAWKKYYKPVKVSNTITIVPTWEEYEAHEDEMIIELDPGMAFGTGTHPTTVLCIQALENVIQGGESVIDVGTGSGVLSIAAAKLGASEVLGLDLDEVAVKSAQMNVKLNKVHRQVMVRQNHLLEGITGTRDVIVANILAEVIIRFVADAKAVLKPGGTFIVSGIIKRKKNDVKDALVTNGFQIEETVELEDWVAIIAKNGHE</sequence>
<gene>
    <name evidence="1" type="primary">prmA</name>
    <name type="ordered locus">BH1349</name>
</gene>
<feature type="chain" id="PRO_0000192236" description="Ribosomal protein L11 methyltransferase">
    <location>
        <begin position="1"/>
        <end position="313"/>
    </location>
</feature>
<feature type="binding site" evidence="1">
    <location>
        <position position="161"/>
    </location>
    <ligand>
        <name>S-adenosyl-L-methionine</name>
        <dbReference type="ChEBI" id="CHEBI:59789"/>
    </ligand>
</feature>
<feature type="binding site" evidence="1">
    <location>
        <position position="182"/>
    </location>
    <ligand>
        <name>S-adenosyl-L-methionine</name>
        <dbReference type="ChEBI" id="CHEBI:59789"/>
    </ligand>
</feature>
<feature type="binding site" evidence="1">
    <location>
        <position position="204"/>
    </location>
    <ligand>
        <name>S-adenosyl-L-methionine</name>
        <dbReference type="ChEBI" id="CHEBI:59789"/>
    </ligand>
</feature>
<feature type="binding site" evidence="1">
    <location>
        <position position="247"/>
    </location>
    <ligand>
        <name>S-adenosyl-L-methionine</name>
        <dbReference type="ChEBI" id="CHEBI:59789"/>
    </ligand>
</feature>
<evidence type="ECO:0000255" key="1">
    <source>
        <dbReference type="HAMAP-Rule" id="MF_00735"/>
    </source>
</evidence>
<organism>
    <name type="scientific">Halalkalibacterium halodurans (strain ATCC BAA-125 / DSM 18197 / FERM 7344 / JCM 9153 / C-125)</name>
    <name type="common">Bacillus halodurans</name>
    <dbReference type="NCBI Taxonomy" id="272558"/>
    <lineage>
        <taxon>Bacteria</taxon>
        <taxon>Bacillati</taxon>
        <taxon>Bacillota</taxon>
        <taxon>Bacilli</taxon>
        <taxon>Bacillales</taxon>
        <taxon>Bacillaceae</taxon>
        <taxon>Halalkalibacterium (ex Joshi et al. 2022)</taxon>
    </lineage>
</organism>
<proteinExistence type="inferred from homology"/>
<keyword id="KW-0963">Cytoplasm</keyword>
<keyword id="KW-0489">Methyltransferase</keyword>
<keyword id="KW-1185">Reference proteome</keyword>
<keyword id="KW-0949">S-adenosyl-L-methionine</keyword>
<keyword id="KW-0808">Transferase</keyword>
<name>PRMA_HALH5</name>
<reference key="1">
    <citation type="journal article" date="2000" name="Nucleic Acids Res.">
        <title>Complete genome sequence of the alkaliphilic bacterium Bacillus halodurans and genomic sequence comparison with Bacillus subtilis.</title>
        <authorList>
            <person name="Takami H."/>
            <person name="Nakasone K."/>
            <person name="Takaki Y."/>
            <person name="Maeno G."/>
            <person name="Sasaki R."/>
            <person name="Masui N."/>
            <person name="Fuji F."/>
            <person name="Hirama C."/>
            <person name="Nakamura Y."/>
            <person name="Ogasawara N."/>
            <person name="Kuhara S."/>
            <person name="Horikoshi K."/>
        </authorList>
    </citation>
    <scope>NUCLEOTIDE SEQUENCE [LARGE SCALE GENOMIC DNA]</scope>
    <source>
        <strain>ATCC BAA-125 / DSM 18197 / FERM 7344 / JCM 9153 / C-125</strain>
    </source>
</reference>